<evidence type="ECO:0000255" key="1">
    <source>
        <dbReference type="HAMAP-Rule" id="MF_00815"/>
    </source>
</evidence>
<sequence>MAVSLNDIKNKIASTKNTSQITNAMQMVSAAKLGKSEEAAKNFQVYAQKVRKLVTDMLHGHEAENARHHSMLISRPVKKSAYIVITSDRGLVGGYNATILKALMELKAEYHPTGEDFEVICIGSVGADFFRARGIQPVYELRGLADQPSFDEVRKIISKTIEMYQNELFDELYVCYNHHVNSLTSQMRVEQMLPIIDLDPNEADEDYTLNLELESSRDSILDQLLPQFAESMIYGAIIDAKTAENAAGMTAMQTATDNAKKVISDLTIQYNRARQAAITQEITEIVAGASALE</sequence>
<reference key="1">
    <citation type="journal article" date="2003" name="J. Bacteriol.">
        <title>Genetic and biochemical characterization of the F-ATPase operon from Streptococcus sanguis 10904.</title>
        <authorList>
            <person name="Kuhnert W.L."/>
            <person name="Quivey R.G. Jr."/>
        </authorList>
    </citation>
    <scope>NUCLEOTIDE SEQUENCE [GENOMIC DNA]</scope>
    <source>
        <strain>10904</strain>
    </source>
</reference>
<organism>
    <name type="scientific">Streptococcus sanguinis</name>
    <dbReference type="NCBI Taxonomy" id="1305"/>
    <lineage>
        <taxon>Bacteria</taxon>
        <taxon>Bacillati</taxon>
        <taxon>Bacillota</taxon>
        <taxon>Bacilli</taxon>
        <taxon>Lactobacillales</taxon>
        <taxon>Streptococcaceae</taxon>
        <taxon>Streptococcus</taxon>
    </lineage>
</organism>
<protein>
    <recommendedName>
        <fullName evidence="1">ATP synthase gamma chain</fullName>
    </recommendedName>
    <alternativeName>
        <fullName evidence="1">ATP synthase F1 sector gamma subunit</fullName>
    </alternativeName>
    <alternativeName>
        <fullName evidence="1">F-ATPase gamma subunit</fullName>
    </alternativeName>
</protein>
<proteinExistence type="inferred from homology"/>
<comment type="function">
    <text evidence="1">Produces ATP from ADP in the presence of a proton gradient across the membrane. The gamma chain is believed to be important in regulating ATPase activity and the flow of protons through the CF(0) complex.</text>
</comment>
<comment type="subunit">
    <text evidence="1">F-type ATPases have 2 components, CF(1) - the catalytic core - and CF(0) - the membrane proton channel. CF(1) has five subunits: alpha(3), beta(3), gamma(1), delta(1), epsilon(1). CF(0) has three main subunits: a, b and c.</text>
</comment>
<comment type="subcellular location">
    <subcellularLocation>
        <location evidence="1">Cell membrane</location>
        <topology evidence="1">Peripheral membrane protein</topology>
    </subcellularLocation>
</comment>
<comment type="similarity">
    <text evidence="1">Belongs to the ATPase gamma chain family.</text>
</comment>
<dbReference type="EMBL" id="AF001955">
    <property type="protein sequence ID" value="AAD00917.1"/>
    <property type="molecule type" value="Genomic_DNA"/>
</dbReference>
<dbReference type="RefSeq" id="WP_002895995.1">
    <property type="nucleotide sequence ID" value="NZ_RQZI01000005.1"/>
</dbReference>
<dbReference type="SMR" id="Q9ZJ02"/>
<dbReference type="OMA" id="MQITSAM"/>
<dbReference type="GO" id="GO:0005886">
    <property type="term" value="C:plasma membrane"/>
    <property type="evidence" value="ECO:0007669"/>
    <property type="project" value="UniProtKB-SubCell"/>
</dbReference>
<dbReference type="GO" id="GO:0045259">
    <property type="term" value="C:proton-transporting ATP synthase complex"/>
    <property type="evidence" value="ECO:0007669"/>
    <property type="project" value="UniProtKB-KW"/>
</dbReference>
<dbReference type="GO" id="GO:0005524">
    <property type="term" value="F:ATP binding"/>
    <property type="evidence" value="ECO:0007669"/>
    <property type="project" value="UniProtKB-UniRule"/>
</dbReference>
<dbReference type="GO" id="GO:0046933">
    <property type="term" value="F:proton-transporting ATP synthase activity, rotational mechanism"/>
    <property type="evidence" value="ECO:0007669"/>
    <property type="project" value="UniProtKB-UniRule"/>
</dbReference>
<dbReference type="GO" id="GO:0042777">
    <property type="term" value="P:proton motive force-driven plasma membrane ATP synthesis"/>
    <property type="evidence" value="ECO:0007669"/>
    <property type="project" value="UniProtKB-UniRule"/>
</dbReference>
<dbReference type="CDD" id="cd12151">
    <property type="entry name" value="F1-ATPase_gamma"/>
    <property type="match status" value="1"/>
</dbReference>
<dbReference type="FunFam" id="3.40.1380.10:FF:000002">
    <property type="entry name" value="ATP synthase gamma chain"/>
    <property type="match status" value="1"/>
</dbReference>
<dbReference type="Gene3D" id="3.40.1380.10">
    <property type="match status" value="1"/>
</dbReference>
<dbReference type="Gene3D" id="1.10.287.80">
    <property type="entry name" value="ATP synthase, gamma subunit, helix hairpin domain"/>
    <property type="match status" value="1"/>
</dbReference>
<dbReference type="HAMAP" id="MF_00815">
    <property type="entry name" value="ATP_synth_gamma_bact"/>
    <property type="match status" value="1"/>
</dbReference>
<dbReference type="InterPro" id="IPR035968">
    <property type="entry name" value="ATP_synth_F1_ATPase_gsu"/>
</dbReference>
<dbReference type="InterPro" id="IPR000131">
    <property type="entry name" value="ATP_synth_F1_gsu"/>
</dbReference>
<dbReference type="InterPro" id="IPR023632">
    <property type="entry name" value="ATP_synth_F1_gsu_CS"/>
</dbReference>
<dbReference type="NCBIfam" id="TIGR01146">
    <property type="entry name" value="ATPsyn_F1gamma"/>
    <property type="match status" value="1"/>
</dbReference>
<dbReference type="NCBIfam" id="NF004147">
    <property type="entry name" value="PRK05621.2-1"/>
    <property type="match status" value="1"/>
</dbReference>
<dbReference type="PANTHER" id="PTHR11693">
    <property type="entry name" value="ATP SYNTHASE GAMMA CHAIN"/>
    <property type="match status" value="1"/>
</dbReference>
<dbReference type="PANTHER" id="PTHR11693:SF22">
    <property type="entry name" value="ATP SYNTHASE SUBUNIT GAMMA, MITOCHONDRIAL"/>
    <property type="match status" value="1"/>
</dbReference>
<dbReference type="Pfam" id="PF00231">
    <property type="entry name" value="ATP-synt"/>
    <property type="match status" value="1"/>
</dbReference>
<dbReference type="PRINTS" id="PR00126">
    <property type="entry name" value="ATPASEGAMMA"/>
</dbReference>
<dbReference type="SUPFAM" id="SSF52943">
    <property type="entry name" value="ATP synthase (F1-ATPase), gamma subunit"/>
    <property type="match status" value="1"/>
</dbReference>
<dbReference type="PROSITE" id="PS00153">
    <property type="entry name" value="ATPASE_GAMMA"/>
    <property type="match status" value="1"/>
</dbReference>
<gene>
    <name evidence="1" type="primary">atpG</name>
</gene>
<accession>Q9ZJ02</accession>
<name>ATPG_STRSA</name>
<keyword id="KW-0066">ATP synthesis</keyword>
<keyword id="KW-1003">Cell membrane</keyword>
<keyword id="KW-0139">CF(1)</keyword>
<keyword id="KW-0375">Hydrogen ion transport</keyword>
<keyword id="KW-0406">Ion transport</keyword>
<keyword id="KW-0472">Membrane</keyword>
<keyword id="KW-0813">Transport</keyword>
<feature type="chain" id="PRO_0000073394" description="ATP synthase gamma chain">
    <location>
        <begin position="1"/>
        <end position="293"/>
    </location>
</feature>